<name>WBP11_HUMAN</name>
<dbReference type="EMBL" id="AB029309">
    <property type="protein sequence ID" value="BAA88410.1"/>
    <property type="molecule type" value="mRNA"/>
</dbReference>
<dbReference type="EMBL" id="AF118023">
    <property type="protein sequence ID" value="AAD30425.1"/>
    <property type="molecule type" value="mRNA"/>
</dbReference>
<dbReference type="EMBL" id="BC001621">
    <property type="protein sequence ID" value="AAH01621.1"/>
    <property type="molecule type" value="mRNA"/>
</dbReference>
<dbReference type="EMBL" id="BC016441">
    <property type="protein sequence ID" value="AAH16441.2"/>
    <property type="molecule type" value="mRNA"/>
</dbReference>
<dbReference type="EMBL" id="BC023532">
    <property type="protein sequence ID" value="AAH23532.1"/>
    <property type="molecule type" value="mRNA"/>
</dbReference>
<dbReference type="CCDS" id="CCDS8666.1"/>
<dbReference type="RefSeq" id="NP_057396.1">
    <property type="nucleotide sequence ID" value="NM_016312.3"/>
</dbReference>
<dbReference type="PDB" id="7ABF">
    <property type="method" value="EM"/>
    <property type="resolution" value="3.90 A"/>
    <property type="chains" value="X=1-641"/>
</dbReference>
<dbReference type="PDB" id="7ABG">
    <property type="method" value="EM"/>
    <property type="resolution" value="7.80 A"/>
    <property type="chains" value="X=1-641"/>
</dbReference>
<dbReference type="PDBsum" id="7ABF"/>
<dbReference type="PDBsum" id="7ABG"/>
<dbReference type="EMDB" id="EMD-11694"/>
<dbReference type="EMDB" id="EMD-11695"/>
<dbReference type="SMR" id="Q9Y2W2"/>
<dbReference type="BioGRID" id="119702">
    <property type="interactions" value="193"/>
</dbReference>
<dbReference type="CORUM" id="Q9Y2W2"/>
<dbReference type="ELM" id="Q9Y2W2"/>
<dbReference type="FunCoup" id="Q9Y2W2">
    <property type="interactions" value="5098"/>
</dbReference>
<dbReference type="IntAct" id="Q9Y2W2">
    <property type="interactions" value="87"/>
</dbReference>
<dbReference type="MINT" id="Q9Y2W2"/>
<dbReference type="STRING" id="9606.ENSP00000261167"/>
<dbReference type="GlyGen" id="Q9Y2W2">
    <property type="glycosylation" value="3 sites, 1 O-linked glycan (3 sites)"/>
</dbReference>
<dbReference type="iPTMnet" id="Q9Y2W2"/>
<dbReference type="MetOSite" id="Q9Y2W2"/>
<dbReference type="PhosphoSitePlus" id="Q9Y2W2"/>
<dbReference type="BioMuta" id="WBP11"/>
<dbReference type="DMDM" id="74735242"/>
<dbReference type="jPOST" id="Q9Y2W2"/>
<dbReference type="MassIVE" id="Q9Y2W2"/>
<dbReference type="PaxDb" id="9606-ENSP00000261167"/>
<dbReference type="PeptideAtlas" id="Q9Y2W2"/>
<dbReference type="ProteomicsDB" id="85915"/>
<dbReference type="Pumba" id="Q9Y2W2"/>
<dbReference type="Antibodypedia" id="23669">
    <property type="antibodies" value="126 antibodies from 23 providers"/>
</dbReference>
<dbReference type="DNASU" id="51729"/>
<dbReference type="Ensembl" id="ENST00000261167.7">
    <property type="protein sequence ID" value="ENSP00000261167.2"/>
    <property type="gene ID" value="ENSG00000084463.8"/>
</dbReference>
<dbReference type="GeneID" id="51729"/>
<dbReference type="KEGG" id="hsa:51729"/>
<dbReference type="MANE-Select" id="ENST00000261167.7">
    <property type="protein sequence ID" value="ENSP00000261167.2"/>
    <property type="RefSeq nucleotide sequence ID" value="NM_016312.3"/>
    <property type="RefSeq protein sequence ID" value="NP_057396.1"/>
</dbReference>
<dbReference type="UCSC" id="uc001rci.4">
    <property type="organism name" value="human"/>
</dbReference>
<dbReference type="AGR" id="HGNC:16461"/>
<dbReference type="CTD" id="51729"/>
<dbReference type="DisGeNET" id="51729"/>
<dbReference type="GeneCards" id="WBP11"/>
<dbReference type="HGNC" id="HGNC:16461">
    <property type="gene designation" value="WBP11"/>
</dbReference>
<dbReference type="HPA" id="ENSG00000084463">
    <property type="expression patterns" value="Low tissue specificity"/>
</dbReference>
<dbReference type="MalaCards" id="WBP11"/>
<dbReference type="MIM" id="618083">
    <property type="type" value="gene"/>
</dbReference>
<dbReference type="MIM" id="619227">
    <property type="type" value="phenotype"/>
</dbReference>
<dbReference type="neXtProt" id="NX_Q9Y2W2"/>
<dbReference type="OpenTargets" id="ENSG00000084463"/>
<dbReference type="PharmGKB" id="PA38144"/>
<dbReference type="VEuPathDB" id="HostDB:ENSG00000084463"/>
<dbReference type="eggNOG" id="KOG4672">
    <property type="taxonomic scope" value="Eukaryota"/>
</dbReference>
<dbReference type="GeneTree" id="ENSGT01130000278545"/>
<dbReference type="HOGENOM" id="CLU_028337_1_0_1"/>
<dbReference type="InParanoid" id="Q9Y2W2"/>
<dbReference type="OMA" id="FGMRMPP"/>
<dbReference type="OrthoDB" id="10067323at2759"/>
<dbReference type="PAN-GO" id="Q9Y2W2">
    <property type="GO annotations" value="2 GO annotations based on evolutionary models"/>
</dbReference>
<dbReference type="PhylomeDB" id="Q9Y2W2"/>
<dbReference type="TreeFam" id="TF323226"/>
<dbReference type="PathwayCommons" id="Q9Y2W2"/>
<dbReference type="Reactome" id="R-HSA-72163">
    <property type="pathway name" value="mRNA Splicing - Major Pathway"/>
</dbReference>
<dbReference type="SignaLink" id="Q9Y2W2"/>
<dbReference type="BioGRID-ORCS" id="51729">
    <property type="hits" value="647 hits in 1157 CRISPR screens"/>
</dbReference>
<dbReference type="CD-CODE" id="91857CE7">
    <property type="entry name" value="Nucleolus"/>
</dbReference>
<dbReference type="ChiTaRS" id="WBP11">
    <property type="organism name" value="human"/>
</dbReference>
<dbReference type="GeneWiki" id="WBP11"/>
<dbReference type="GenomeRNAi" id="51729"/>
<dbReference type="Pharos" id="Q9Y2W2">
    <property type="development level" value="Tbio"/>
</dbReference>
<dbReference type="PRO" id="PR:Q9Y2W2"/>
<dbReference type="Proteomes" id="UP000005640">
    <property type="component" value="Chromosome 12"/>
</dbReference>
<dbReference type="RNAct" id="Q9Y2W2">
    <property type="molecule type" value="protein"/>
</dbReference>
<dbReference type="Bgee" id="ENSG00000084463">
    <property type="expression patterns" value="Expressed in sural nerve and 206 other cell types or tissues"/>
</dbReference>
<dbReference type="ExpressionAtlas" id="Q9Y2W2">
    <property type="expression patterns" value="baseline and differential"/>
</dbReference>
<dbReference type="GO" id="GO:0005829">
    <property type="term" value="C:cytosol"/>
    <property type="evidence" value="ECO:0000314"/>
    <property type="project" value="HPA"/>
</dbReference>
<dbReference type="GO" id="GO:0043231">
    <property type="term" value="C:intracellular membrane-bounded organelle"/>
    <property type="evidence" value="ECO:0000314"/>
    <property type="project" value="HPA"/>
</dbReference>
<dbReference type="GO" id="GO:0005654">
    <property type="term" value="C:nucleoplasm"/>
    <property type="evidence" value="ECO:0000314"/>
    <property type="project" value="HPA"/>
</dbReference>
<dbReference type="GO" id="GO:0005634">
    <property type="term" value="C:nucleus"/>
    <property type="evidence" value="ECO:0000304"/>
    <property type="project" value="ProtInc"/>
</dbReference>
<dbReference type="GO" id="GO:0003723">
    <property type="term" value="F:RNA binding"/>
    <property type="evidence" value="ECO:0007005"/>
    <property type="project" value="UniProtKB"/>
</dbReference>
<dbReference type="GO" id="GO:0003697">
    <property type="term" value="F:single-stranded DNA binding"/>
    <property type="evidence" value="ECO:0000304"/>
    <property type="project" value="ProtInc"/>
</dbReference>
<dbReference type="GO" id="GO:0050699">
    <property type="term" value="F:WW domain binding"/>
    <property type="evidence" value="ECO:0000353"/>
    <property type="project" value="UniProtKB"/>
</dbReference>
<dbReference type="GO" id="GO:0006397">
    <property type="term" value="P:mRNA processing"/>
    <property type="evidence" value="ECO:0007669"/>
    <property type="project" value="UniProtKB-KW"/>
</dbReference>
<dbReference type="GO" id="GO:0008380">
    <property type="term" value="P:RNA splicing"/>
    <property type="evidence" value="ECO:0007669"/>
    <property type="project" value="UniProtKB-KW"/>
</dbReference>
<dbReference type="GO" id="GO:0006364">
    <property type="term" value="P:rRNA processing"/>
    <property type="evidence" value="ECO:0007669"/>
    <property type="project" value="UniProtKB-KW"/>
</dbReference>
<dbReference type="InterPro" id="IPR019007">
    <property type="entry name" value="WW_dom-bd_prot_11"/>
</dbReference>
<dbReference type="PANTHER" id="PTHR13361">
    <property type="entry name" value="WW DOMAIN-BINDING PROTEIN 11"/>
    <property type="match status" value="1"/>
</dbReference>
<dbReference type="PANTHER" id="PTHR13361:SF3">
    <property type="entry name" value="WW DOMAIN-BINDING PROTEIN 11"/>
    <property type="match status" value="1"/>
</dbReference>
<dbReference type="Pfam" id="PF09429">
    <property type="entry name" value="Wbp11"/>
    <property type="match status" value="1"/>
</dbReference>
<organism>
    <name type="scientific">Homo sapiens</name>
    <name type="common">Human</name>
    <dbReference type="NCBI Taxonomy" id="9606"/>
    <lineage>
        <taxon>Eukaryota</taxon>
        <taxon>Metazoa</taxon>
        <taxon>Chordata</taxon>
        <taxon>Craniata</taxon>
        <taxon>Vertebrata</taxon>
        <taxon>Euteleostomi</taxon>
        <taxon>Mammalia</taxon>
        <taxon>Eutheria</taxon>
        <taxon>Euarchontoglires</taxon>
        <taxon>Primates</taxon>
        <taxon>Haplorrhini</taxon>
        <taxon>Catarrhini</taxon>
        <taxon>Hominidae</taxon>
        <taxon>Homo</taxon>
    </lineage>
</organism>
<feature type="chain" id="PRO_0000065945" description="WW domain-binding protein 11">
    <location>
        <begin position="1"/>
        <end position="641"/>
    </location>
</feature>
<feature type="region of interest" description="Required for nuclear import" evidence="1">
    <location>
        <begin position="1"/>
        <end position="45"/>
    </location>
</feature>
<feature type="region of interest" description="Disordered" evidence="4">
    <location>
        <begin position="1"/>
        <end position="37"/>
    </location>
</feature>
<feature type="region of interest" description="Disordered" evidence="4">
    <location>
        <begin position="186"/>
        <end position="213"/>
    </location>
</feature>
<feature type="region of interest" description="Interaction with PP1" evidence="1">
    <location>
        <begin position="217"/>
        <end position="221"/>
    </location>
</feature>
<feature type="region of interest" description="Disordered" evidence="4">
    <location>
        <begin position="236"/>
        <end position="552"/>
    </location>
</feature>
<feature type="region of interest" description="Interaction with PP1" evidence="1">
    <location>
        <begin position="306"/>
        <end position="310"/>
    </location>
</feature>
<feature type="region of interest" description="Disordered" evidence="4">
    <location>
        <begin position="587"/>
        <end position="623"/>
    </location>
</feature>
<feature type="coiled-coil region" evidence="3">
    <location>
        <begin position="75"/>
        <end position="133"/>
    </location>
</feature>
<feature type="short sequence motif" description="PGR">
    <location>
        <begin position="455"/>
        <end position="466"/>
    </location>
</feature>
<feature type="compositionally biased region" description="Polar residues" evidence="4">
    <location>
        <begin position="1"/>
        <end position="11"/>
    </location>
</feature>
<feature type="compositionally biased region" description="Basic residues" evidence="4">
    <location>
        <begin position="28"/>
        <end position="37"/>
    </location>
</feature>
<feature type="compositionally biased region" description="Pro residues" evidence="4">
    <location>
        <begin position="192"/>
        <end position="210"/>
    </location>
</feature>
<feature type="compositionally biased region" description="Acidic residues" evidence="4">
    <location>
        <begin position="253"/>
        <end position="263"/>
    </location>
</feature>
<feature type="compositionally biased region" description="Basic and acidic residues" evidence="4">
    <location>
        <begin position="276"/>
        <end position="304"/>
    </location>
</feature>
<feature type="compositionally biased region" description="Acidic residues" evidence="4">
    <location>
        <begin position="351"/>
        <end position="365"/>
    </location>
</feature>
<feature type="compositionally biased region" description="Basic and acidic residues" evidence="4">
    <location>
        <begin position="366"/>
        <end position="380"/>
    </location>
</feature>
<feature type="compositionally biased region" description="Low complexity" evidence="4">
    <location>
        <begin position="386"/>
        <end position="404"/>
    </location>
</feature>
<feature type="compositionally biased region" description="Pro residues" evidence="4">
    <location>
        <begin position="405"/>
        <end position="447"/>
    </location>
</feature>
<feature type="compositionally biased region" description="Pro residues" evidence="4">
    <location>
        <begin position="456"/>
        <end position="504"/>
    </location>
</feature>
<feature type="compositionally biased region" description="Pro residues" evidence="4">
    <location>
        <begin position="510"/>
        <end position="530"/>
    </location>
</feature>
<feature type="modified residue" description="N6-acetyllysine" evidence="15">
    <location>
        <position position="13"/>
    </location>
</feature>
<feature type="modified residue" description="Phosphoserine" evidence="16 19">
    <location>
        <position position="181"/>
    </location>
</feature>
<feature type="modified residue" description="Omega-N-methylarginine" evidence="20">
    <location>
        <position position="192"/>
    </location>
</feature>
<feature type="modified residue" description="Phosphotyrosine" evidence="2">
    <location>
        <position position="236"/>
    </location>
</feature>
<feature type="modified residue" description="Phosphoserine" evidence="14 17 18 19">
    <location>
        <position position="237"/>
    </location>
</feature>
<feature type="modified residue" description="Phosphoserine" evidence="13 18">
    <location>
        <position position="279"/>
    </location>
</feature>
<feature type="modified residue" description="Phosphoserine" evidence="13 18">
    <location>
        <position position="283"/>
    </location>
</feature>
<feature type="modified residue" description="Phosphoserine" evidence="16 18">
    <location>
        <position position="353"/>
    </location>
</feature>
<feature type="modified residue" description="Phosphoserine" evidence="16 18 21">
    <location>
        <position position="361"/>
    </location>
</feature>
<feature type="modified residue" description="Phosphoserine" evidence="16 18 21">
    <location>
        <position position="364"/>
    </location>
</feature>
<feature type="modified residue" description="N6-acetyllysine" evidence="2">
    <location>
        <position position="565"/>
    </location>
</feature>
<feature type="modified residue" description="Phosphoserine" evidence="19">
    <location>
        <position position="600"/>
    </location>
</feature>
<feature type="cross-link" description="Glycyl lysine isopeptide (Lys-Gly) (interchain with G-Cter in SUMO2)" evidence="22">
    <location>
        <position position="557"/>
    </location>
</feature>
<feature type="cross-link" description="Glycyl lysine isopeptide (Lys-Gly) (interchain with G-Cter in SUMO2)" evidence="22">
    <location>
        <position position="572"/>
    </location>
</feature>
<feature type="sequence variant" id="VAR_085325" description="In VCTRL; uncertain significance; dbSNP:rs1949936099." evidence="10">
    <original>M</original>
    <variation>V</variation>
    <location>
        <position position="57"/>
    </location>
</feature>
<feature type="sequence variant" id="VAR_085326" description="In VCTRL." evidence="10">
    <location>
        <begin position="94"/>
        <end position="641"/>
    </location>
</feature>
<feature type="sequence variant" id="VAR_085327" description="In VCTRL." evidence="10">
    <location>
        <begin position="162"/>
        <end position="641"/>
    </location>
</feature>
<feature type="sequence variant" id="VAR_085328" description="In VCTRL." evidence="10">
    <location>
        <begin position="230"/>
        <end position="641"/>
    </location>
</feature>
<feature type="mutagenesis site" description="Loss of PQBP1-binding; when associated with A-197 and A-198." evidence="5">
    <original>R</original>
    <variation>A</variation>
    <location>
        <position position="192"/>
    </location>
</feature>
<feature type="mutagenesis site" description="Loss of PQBP1-binding; when associated with A-192 and A-198." evidence="5">
    <original>R</original>
    <variation>A</variation>
    <location>
        <position position="197"/>
    </location>
</feature>
<feature type="mutagenesis site" description="Loss of PQBP1-binding; when associated with A-192 and A-197." evidence="5">
    <original>K</original>
    <variation>A</variation>
    <location>
        <position position="198"/>
    </location>
</feature>
<proteinExistence type="evidence at protein level"/>
<gene>
    <name evidence="12" type="primary">WBP11</name>
    <name type="synonym">NPWBP</name>
    <name type="synonym">SIPP1</name>
    <name type="synonym">SNP70</name>
</gene>
<protein>
    <recommendedName>
        <fullName evidence="11">WW domain-binding protein 11</fullName>
        <shortName>WBP-11</shortName>
    </recommendedName>
    <alternativeName>
        <fullName>Npw38-binding protein</fullName>
        <shortName>NpwBP</shortName>
    </alternativeName>
    <alternativeName>
        <fullName>SH3 domain-binding protein SNP70</fullName>
    </alternativeName>
    <alternativeName>
        <fullName>Splicing factor that interacts with PQBP-1 and PP1</fullName>
    </alternativeName>
</protein>
<reference key="1">
    <citation type="journal article" date="1999" name="J. Biol. Chem.">
        <title>Association of two nuclear proteins, Npw38 and NpwBP, via the interaction between the WW domain and a novel proline-rich motif containing glycine and arginine.</title>
        <authorList>
            <person name="Komuro A."/>
            <person name="Saeki M."/>
            <person name="Kato S."/>
        </authorList>
    </citation>
    <scope>NUCLEOTIDE SEQUENCE [MRNA]</scope>
    <scope>PROTEIN SEQUENCE OF 2-25</scope>
    <scope>FUNCTION</scope>
    <scope>INTERACTION WITH PQBP1</scope>
    <scope>SUBCELLULAR LOCATION</scope>
    <scope>MUTAGENESIS OF ARG-192; ARG-197 AND LYS-198</scope>
</reference>
<reference key="2">
    <citation type="journal article" date="2001" name="J. Biol. Chem.">
        <title>A nuclear SH3 domain-binding protein that colocalizes with mRNA splicing factors and intermediate filament-containing perinuclear networks.</title>
        <authorList>
            <person name="Craggs G."/>
            <person name="Finan P.M."/>
            <person name="Lawson D."/>
            <person name="Wingfield J."/>
            <person name="Perera T."/>
            <person name="Gadher S."/>
            <person name="Totty N.F."/>
            <person name="Kellie S."/>
        </authorList>
    </citation>
    <scope>NUCLEOTIDE SEQUENCE [MRNA]</scope>
    <scope>FUNCTION</scope>
    <scope>TISSUE SPECIFICITY</scope>
</reference>
<reference key="3">
    <citation type="journal article" date="2004" name="Genome Res.">
        <title>The status, quality, and expansion of the NIH full-length cDNA project: the Mammalian Gene Collection (MGC).</title>
        <authorList>
            <consortium name="The MGC Project Team"/>
        </authorList>
    </citation>
    <scope>NUCLEOTIDE SEQUENCE [LARGE SCALE MRNA]</scope>
    <source>
        <tissue>Eye</tissue>
        <tissue>Muscle</tissue>
        <tissue>Placenta</tissue>
    </source>
</reference>
<reference key="4">
    <citation type="journal article" date="2004" name="Biochem. J.">
        <title>SIPP1, a novel pre-mRNA splicing factor and interactor of protein phosphatase-1.</title>
        <authorList>
            <person name="Llorian M."/>
            <person name="Beullens M."/>
            <person name="Andres I."/>
            <person name="Ortiz J.M."/>
            <person name="Bollen M."/>
        </authorList>
    </citation>
    <scope>FUNCTION</scope>
    <scope>SUBCELLULAR LOCATION</scope>
</reference>
<reference key="5">
    <citation type="journal article" date="2006" name="Cell">
        <title>Global, in vivo, and site-specific phosphorylation dynamics in signaling networks.</title>
        <authorList>
            <person name="Olsen J.V."/>
            <person name="Blagoev B."/>
            <person name="Gnad F."/>
            <person name="Macek B."/>
            <person name="Kumar C."/>
            <person name="Mortensen P."/>
            <person name="Mann M."/>
        </authorList>
    </citation>
    <scope>PHOSPHORYLATION [LARGE SCALE ANALYSIS] AT SER-279 AND SER-283</scope>
    <scope>IDENTIFICATION BY MASS SPECTROMETRY [LARGE SCALE ANALYSIS]</scope>
    <source>
        <tissue>Cervix carcinoma</tissue>
    </source>
</reference>
<reference key="6">
    <citation type="journal article" date="2008" name="Proc. Natl. Acad. Sci. U.S.A.">
        <title>A quantitative atlas of mitotic phosphorylation.</title>
        <authorList>
            <person name="Dephoure N."/>
            <person name="Zhou C."/>
            <person name="Villen J."/>
            <person name="Beausoleil S.A."/>
            <person name="Bakalarski C.E."/>
            <person name="Elledge S.J."/>
            <person name="Gygi S.P."/>
        </authorList>
    </citation>
    <scope>PHOSPHORYLATION [LARGE SCALE ANALYSIS] AT SER-237</scope>
    <scope>IDENTIFICATION BY MASS SPECTROMETRY [LARGE SCALE ANALYSIS]</scope>
    <source>
        <tissue>Cervix carcinoma</tissue>
    </source>
</reference>
<reference key="7">
    <citation type="journal article" date="2009" name="J. Biol. Chem.">
        <title>Structure and function of the two tandem WW domains of the pre-mRNA splicing factor FBP21 (formin-binding protein 21).</title>
        <authorList>
            <person name="Huang X."/>
            <person name="Beullens M."/>
            <person name="Zhang J."/>
            <person name="Zhou Y."/>
            <person name="Nicolaescu E."/>
            <person name="Lesage B."/>
            <person name="Hu Q."/>
            <person name="Wu J."/>
            <person name="Bollen M."/>
            <person name="Shi Y."/>
        </authorList>
    </citation>
    <scope>INTERACTION WITH WBP4</scope>
</reference>
<reference key="8">
    <citation type="journal article" date="2009" name="Sci. Signal.">
        <title>Quantitative phosphoproteomic analysis of T cell receptor signaling reveals system-wide modulation of protein-protein interactions.</title>
        <authorList>
            <person name="Mayya V."/>
            <person name="Lundgren D.H."/>
            <person name="Hwang S.-I."/>
            <person name="Rezaul K."/>
            <person name="Wu L."/>
            <person name="Eng J.K."/>
            <person name="Rodionov V."/>
            <person name="Han D.K."/>
        </authorList>
    </citation>
    <scope>PHOSPHORYLATION [LARGE SCALE ANALYSIS] AT SER-181; SER-353; SER-361 AND SER-364</scope>
    <scope>IDENTIFICATION BY MASS SPECTROMETRY [LARGE SCALE ANALYSIS]</scope>
    <source>
        <tissue>Leukemic T-cell</tissue>
    </source>
</reference>
<reference key="9">
    <citation type="journal article" date="2009" name="Science">
        <title>Lysine acetylation targets protein complexes and co-regulates major cellular functions.</title>
        <authorList>
            <person name="Choudhary C."/>
            <person name="Kumar C."/>
            <person name="Gnad F."/>
            <person name="Nielsen M.L."/>
            <person name="Rehman M."/>
            <person name="Walther T.C."/>
            <person name="Olsen J.V."/>
            <person name="Mann M."/>
        </authorList>
    </citation>
    <scope>ACETYLATION [LARGE SCALE ANALYSIS] AT LYS-13</scope>
    <scope>IDENTIFICATION BY MASS SPECTROMETRY [LARGE SCALE ANALYSIS]</scope>
</reference>
<reference key="10">
    <citation type="journal article" date="2010" name="J. Biol. Chem.">
        <title>Y65C missense mutation in the WW domain of the Golabi-Ito-Hall syndrome protein PQBP1 affects its binding activity and deregulates pre-mRNA splicing.</title>
        <authorList>
            <person name="Tapia V.E."/>
            <person name="Nicolaescu E."/>
            <person name="McDonald C.B."/>
            <person name="Musi V."/>
            <person name="Oka T."/>
            <person name="Inayoshi Y."/>
            <person name="Satteson A.C."/>
            <person name="Mazack V."/>
            <person name="Humbert J."/>
            <person name="Gaffney C.J."/>
            <person name="Beullens M."/>
            <person name="Schwartz C.E."/>
            <person name="Landgraf C."/>
            <person name="Volkmer R."/>
            <person name="Pastore A."/>
            <person name="Farooq A."/>
            <person name="Bollen M."/>
            <person name="Sudol M."/>
        </authorList>
    </citation>
    <scope>INTERACTION WITH PQBP1</scope>
</reference>
<reference key="11">
    <citation type="journal article" date="2010" name="Sci. Signal.">
        <title>Quantitative phosphoproteomics reveals widespread full phosphorylation site occupancy during mitosis.</title>
        <authorList>
            <person name="Olsen J.V."/>
            <person name="Vermeulen M."/>
            <person name="Santamaria A."/>
            <person name="Kumar C."/>
            <person name="Miller M.L."/>
            <person name="Jensen L.J."/>
            <person name="Gnad F."/>
            <person name="Cox J."/>
            <person name="Jensen T.S."/>
            <person name="Nigg E.A."/>
            <person name="Brunak S."/>
            <person name="Mann M."/>
        </authorList>
    </citation>
    <scope>PHOSPHORYLATION [LARGE SCALE ANALYSIS] AT SER-237</scope>
    <scope>IDENTIFICATION BY MASS SPECTROMETRY [LARGE SCALE ANALYSIS]</scope>
    <source>
        <tissue>Cervix carcinoma</tissue>
    </source>
</reference>
<reference key="12">
    <citation type="journal article" date="2011" name="BMC Syst. Biol.">
        <title>Initial characterization of the human central proteome.</title>
        <authorList>
            <person name="Burkard T.R."/>
            <person name="Planyavsky M."/>
            <person name="Kaupe I."/>
            <person name="Breitwieser F.P."/>
            <person name="Buerckstuemmer T."/>
            <person name="Bennett K.L."/>
            <person name="Superti-Furga G."/>
            <person name="Colinge J."/>
        </authorList>
    </citation>
    <scope>IDENTIFICATION BY MASS SPECTROMETRY [LARGE SCALE ANALYSIS]</scope>
</reference>
<reference key="13">
    <citation type="journal article" date="2011" name="Sci. Signal.">
        <title>System-wide temporal characterization of the proteome and phosphoproteome of human embryonic stem cell differentiation.</title>
        <authorList>
            <person name="Rigbolt K.T."/>
            <person name="Prokhorova T.A."/>
            <person name="Akimov V."/>
            <person name="Henningsen J."/>
            <person name="Johansen P.T."/>
            <person name="Kratchmarova I."/>
            <person name="Kassem M."/>
            <person name="Mann M."/>
            <person name="Olsen J.V."/>
            <person name="Blagoev B."/>
        </authorList>
    </citation>
    <scope>PHOSPHORYLATION [LARGE SCALE ANALYSIS] AT SER-237; SER-279; SER-283; SER-353; SER-361 AND SER-364</scope>
    <scope>IDENTIFICATION BY MASS SPECTROMETRY [LARGE SCALE ANALYSIS]</scope>
</reference>
<reference key="14">
    <citation type="journal article" date="2013" name="J. Proteome Res.">
        <title>Toward a comprehensive characterization of a human cancer cell phosphoproteome.</title>
        <authorList>
            <person name="Zhou H."/>
            <person name="Di Palma S."/>
            <person name="Preisinger C."/>
            <person name="Peng M."/>
            <person name="Polat A.N."/>
            <person name="Heck A.J."/>
            <person name="Mohammed S."/>
        </authorList>
    </citation>
    <scope>PHOSPHORYLATION [LARGE SCALE ANALYSIS] AT SER-181; SER-237 AND SER-600</scope>
    <scope>IDENTIFICATION BY MASS SPECTROMETRY [LARGE SCALE ANALYSIS]</scope>
    <source>
        <tissue>Cervix carcinoma</tissue>
        <tissue>Erythroleukemia</tissue>
    </source>
</reference>
<reference key="15">
    <citation type="journal article" date="2014" name="J. Proteomics">
        <title>An enzyme assisted RP-RPLC approach for in-depth analysis of human liver phosphoproteome.</title>
        <authorList>
            <person name="Bian Y."/>
            <person name="Song C."/>
            <person name="Cheng K."/>
            <person name="Dong M."/>
            <person name="Wang F."/>
            <person name="Huang J."/>
            <person name="Sun D."/>
            <person name="Wang L."/>
            <person name="Ye M."/>
            <person name="Zou H."/>
        </authorList>
    </citation>
    <scope>PHOSPHORYLATION [LARGE SCALE ANALYSIS] AT SER-361 AND SER-364</scope>
    <scope>IDENTIFICATION BY MASS SPECTROMETRY [LARGE SCALE ANALYSIS]</scope>
    <source>
        <tissue>Liver</tissue>
    </source>
</reference>
<reference key="16">
    <citation type="journal article" date="2014" name="Mol. Cell. Proteomics">
        <title>Immunoaffinity enrichment and mass spectrometry analysis of protein methylation.</title>
        <authorList>
            <person name="Guo A."/>
            <person name="Gu H."/>
            <person name="Zhou J."/>
            <person name="Mulhern D."/>
            <person name="Wang Y."/>
            <person name="Lee K.A."/>
            <person name="Yang V."/>
            <person name="Aguiar M."/>
            <person name="Kornhauser J."/>
            <person name="Jia X."/>
            <person name="Ren J."/>
            <person name="Beausoleil S.A."/>
            <person name="Silva J.C."/>
            <person name="Vemulapalli V."/>
            <person name="Bedford M.T."/>
            <person name="Comb M.J."/>
        </authorList>
    </citation>
    <scope>METHYLATION [LARGE SCALE ANALYSIS] AT ARG-192</scope>
    <scope>IDENTIFICATION BY MASS SPECTROMETRY [LARGE SCALE ANALYSIS]</scope>
    <source>
        <tissue>Colon carcinoma</tissue>
    </source>
</reference>
<reference key="17">
    <citation type="journal article" date="2017" name="Nat. Struct. Mol. Biol.">
        <title>Site-specific mapping of the human SUMO proteome reveals co-modification with phosphorylation.</title>
        <authorList>
            <person name="Hendriks I.A."/>
            <person name="Lyon D."/>
            <person name="Young C."/>
            <person name="Jensen L.J."/>
            <person name="Vertegaal A.C."/>
            <person name="Nielsen M.L."/>
        </authorList>
    </citation>
    <scope>SUMOYLATION [LARGE SCALE ANALYSIS] AT LYS-557 AND LYS-572</scope>
    <scope>IDENTIFICATION BY MASS SPECTROMETRY [LARGE SCALE ANALYSIS]</scope>
</reference>
<reference key="18">
    <citation type="journal article" date="2020" name="Hum. Mol. Genet.">
        <title>Heterozygous loss of WBP11 function causes multiple congenital defects in humans and mice.</title>
        <authorList>
            <person name="Martin E.M.M.A."/>
            <person name="Enriquez A."/>
            <person name="Sparrow D.B."/>
            <person name="Humphreys D.T."/>
            <person name="McInerney-Leo A.M."/>
            <person name="Leo P.J."/>
            <person name="Duncan E.L."/>
            <person name="Iyer K.R."/>
            <person name="Greasby J.A."/>
            <person name="Ip E."/>
            <person name="Giannoulatou E."/>
            <person name="Sheng D."/>
            <person name="Wohler E."/>
            <person name="Dimartino C."/>
            <person name="Amiel J."/>
            <person name="Capri Y."/>
            <person name="Lehalle D."/>
            <person name="Mory A."/>
            <person name="Wilnai Y."/>
            <person name="Lebenthal Y."/>
            <person name="Gharavi A.G."/>
            <person name="Krzemien G.G."/>
            <person name="Miklaszewska M."/>
            <person name="Steiner R.D."/>
            <person name="Raggio C."/>
            <person name="Blank R."/>
            <person name="Baris Feldman H."/>
            <person name="Milo Rasouly H."/>
            <person name="Sobreira N.L.M."/>
            <person name="Jobling R."/>
            <person name="Gordon C.T."/>
            <person name="Giampietro P.F."/>
            <person name="Dunwoodie S.L."/>
            <person name="Chapman G."/>
        </authorList>
    </citation>
    <scope>VARIANTS VCTRL VAL-57; 94-ARG--LEU-641 DEL; 162-GLN--LEU-641 DEL AND 230-ARG--LEU-641 DEL</scope>
</reference>
<comment type="function">
    <text evidence="5 6 7">Activates pre-mRNA splicing. May inhibit PP1 phosphatase activity.</text>
</comment>
<comment type="subunit">
    <text evidence="1 5 8 9">Interacts with PPP1CA, PPP1CB and PPP1CC (By similarity). Interacts via the PGR motif with PQBP1 in the nucleus. Interacts with the WW domains of WBP4.</text>
</comment>
<comment type="interaction">
    <interactant intactId="EBI-714455">
        <id>Q9Y2W2</id>
    </interactant>
    <interactant intactId="EBI-746224">
        <id>Q49AR2</id>
        <label>C5orf22</label>
    </interactant>
    <organismsDiffer>false</organismsDiffer>
    <experiments>6</experiments>
</comment>
<comment type="interaction">
    <interactant intactId="EBI-714455">
        <id>Q9Y2W2</id>
    </interactant>
    <interactant intactId="EBI-768015">
        <id>O95400</id>
        <label>CD2BP2</label>
    </interactant>
    <organismsDiffer>false</organismsDiffer>
    <experiments>2</experiments>
</comment>
<comment type="interaction">
    <interactant intactId="EBI-714455">
        <id>Q9Y2W2</id>
    </interactant>
    <interactant intactId="EBI-515315">
        <id>P06241</id>
        <label>FYN</label>
    </interactant>
    <organismsDiffer>false</organismsDiffer>
    <experiments>3</experiments>
</comment>
<comment type="interaction">
    <interactant intactId="EBI-714455">
        <id>Q9Y2W2</id>
    </interactant>
    <interactant intactId="EBI-401755">
        <id>P62993</id>
        <label>GRB2</label>
    </interactant>
    <organismsDiffer>false</organismsDiffer>
    <experiments>4</experiments>
</comment>
<comment type="interaction">
    <interactant intactId="EBI-714455">
        <id>Q9Y2W2</id>
    </interactant>
    <interactant intactId="EBI-348259">
        <id>Q96EZ8</id>
        <label>MCRS1</label>
    </interactant>
    <organismsDiffer>false</organismsDiffer>
    <experiments>5</experiments>
</comment>
<comment type="interaction">
    <interactant intactId="EBI-714455">
        <id>Q9Y2W2</id>
    </interactant>
    <interactant intactId="EBI-10288852">
        <id>Q9UBU8-2</id>
        <label>MORF4L1</label>
    </interactant>
    <organismsDiffer>false</organismsDiffer>
    <experiments>3</experiments>
</comment>
<comment type="interaction">
    <interactant intactId="EBI-714455">
        <id>Q9Y2W2</id>
    </interactant>
    <interactant intactId="EBI-10269566">
        <id>Q8NDC4</id>
        <label>MORN4</label>
    </interactant>
    <organismsDiffer>false</organismsDiffer>
    <experiments>3</experiments>
</comment>
<comment type="interaction">
    <interactant intactId="EBI-714455">
        <id>Q9Y2W2</id>
    </interactant>
    <interactant intactId="EBI-946095">
        <id>Q15365</id>
        <label>PCBP1</label>
    </interactant>
    <organismsDiffer>false</organismsDiffer>
    <experiments>2</experiments>
</comment>
<comment type="interaction">
    <interactant intactId="EBI-714455">
        <id>Q9Y2W2</id>
    </interactant>
    <interactant intactId="EBI-357253">
        <id>P62136</id>
        <label>PPP1CA</label>
    </interactant>
    <organismsDiffer>false</organismsDiffer>
    <experiments>5</experiments>
</comment>
<comment type="interaction">
    <interactant intactId="EBI-714455">
        <id>Q9Y2W2</id>
    </interactant>
    <interactant intactId="EBI-713867">
        <id>O60828</id>
        <label>PQBP1</label>
    </interactant>
    <organismsDiffer>false</organismsDiffer>
    <experiments>13</experiments>
</comment>
<comment type="interaction">
    <interactant intactId="EBI-714455">
        <id>Q9Y2W2</id>
    </interactant>
    <interactant intactId="EBI-11984663">
        <id>Q06455-2</id>
        <label>RUNX1T1</label>
    </interactant>
    <organismsDiffer>false</organismsDiffer>
    <experiments>3</experiments>
</comment>
<comment type="interaction">
    <interactant intactId="EBI-714455">
        <id>Q9Y2W2</id>
    </interactant>
    <interactant intactId="EBI-81088">
        <id>Q15436</id>
        <label>SEC23A</label>
    </interactant>
    <organismsDiffer>false</organismsDiffer>
    <experiments>3</experiments>
</comment>
<comment type="interaction">
    <interactant intactId="EBI-714455">
        <id>Q9Y2W2</id>
    </interactant>
    <interactant intactId="EBI-740653">
        <id>Q96BS2</id>
        <label>TESC</label>
    </interactant>
    <organismsDiffer>false</organismsDiffer>
    <experiments>3</experiments>
</comment>
<comment type="interaction">
    <interactant intactId="EBI-714455">
        <id>Q9Y2W2</id>
    </interactant>
    <interactant intactId="EBI-3650647">
        <id>Q9BUZ4</id>
        <label>TRAF4</label>
    </interactant>
    <organismsDiffer>false</organismsDiffer>
    <experiments>3</experiments>
</comment>
<comment type="interaction">
    <interactant intactId="EBI-714455">
        <id>Q9Y2W2</id>
    </interactant>
    <interactant intactId="EBI-7353612">
        <id>P57075-2</id>
        <label>UBASH3A</label>
    </interactant>
    <organismsDiffer>false</organismsDiffer>
    <experiments>3</experiments>
</comment>
<comment type="interaction">
    <interactant intactId="EBI-714455">
        <id>Q9Y2W2</id>
    </interactant>
    <interactant intactId="EBI-6927928">
        <id>PRO_0000045603</id>
        <dbReference type="UniProtKB" id="Q99IB8"/>
    </interactant>
    <organismsDiffer>true</organismsDiffer>
    <experiments>3</experiments>
</comment>
<comment type="subcellular location">
    <subcellularLocation>
        <location>Nucleus</location>
    </subcellularLocation>
    <subcellularLocation>
        <location>Cytoplasm</location>
    </subcellularLocation>
    <text>Predominantly located in the nucleus with granular heterogeneous distribution. Excluded from nucleoli in interphase cells, distributed throughout cytoplasm in dividing cells. Colocalized with SC35 and U2B in the nucleus. In the cytoplasm, associates with the intermediate filament protein vimentin.</text>
</comment>
<comment type="tissue specificity">
    <text evidence="6">Ubiquitous. Highly expressed in the heart, pancreas, kidney skeletal muscle, placenta and brain (at protein level). Weakly expressed in liver and lung.</text>
</comment>
<comment type="disease" evidence="10">
    <disease id="DI-06041">
        <name>Vertebral, cardiac, tracheoesophageal, renal, and limb defects</name>
        <acronym>VCTRL</acronym>
        <description>An autosomal dominant disorder with incomplete penetrance and variable expressivity, characterized by cardiac, vertebral, tracheo-esophageal, renal and limb defects. Some patients also exhibit craniofacial abnormalities.</description>
        <dbReference type="MIM" id="619227"/>
    </disease>
    <text>The disease is caused by variants affecting the gene represented in this entry.</text>
</comment>
<evidence type="ECO:0000250" key="1"/>
<evidence type="ECO:0000250" key="2">
    <source>
        <dbReference type="UniProtKB" id="Q923D5"/>
    </source>
</evidence>
<evidence type="ECO:0000255" key="3"/>
<evidence type="ECO:0000256" key="4">
    <source>
        <dbReference type="SAM" id="MobiDB-lite"/>
    </source>
</evidence>
<evidence type="ECO:0000269" key="5">
    <source>
    </source>
</evidence>
<evidence type="ECO:0000269" key="6">
    <source>
    </source>
</evidence>
<evidence type="ECO:0000269" key="7">
    <source>
    </source>
</evidence>
<evidence type="ECO:0000269" key="8">
    <source>
    </source>
</evidence>
<evidence type="ECO:0000269" key="9">
    <source>
    </source>
</evidence>
<evidence type="ECO:0000269" key="10">
    <source>
    </source>
</evidence>
<evidence type="ECO:0000305" key="11"/>
<evidence type="ECO:0000312" key="12">
    <source>
        <dbReference type="HGNC" id="HGNC:16461"/>
    </source>
</evidence>
<evidence type="ECO:0007744" key="13">
    <source>
    </source>
</evidence>
<evidence type="ECO:0007744" key="14">
    <source>
    </source>
</evidence>
<evidence type="ECO:0007744" key="15">
    <source>
    </source>
</evidence>
<evidence type="ECO:0007744" key="16">
    <source>
    </source>
</evidence>
<evidence type="ECO:0007744" key="17">
    <source>
    </source>
</evidence>
<evidence type="ECO:0007744" key="18">
    <source>
    </source>
</evidence>
<evidence type="ECO:0007744" key="19">
    <source>
    </source>
</evidence>
<evidence type="ECO:0007744" key="20">
    <source>
    </source>
</evidence>
<evidence type="ECO:0007744" key="21">
    <source>
    </source>
</evidence>
<evidence type="ECO:0007744" key="22">
    <source>
    </source>
</evidence>
<keyword id="KW-0002">3D-structure</keyword>
<keyword id="KW-0007">Acetylation</keyword>
<keyword id="KW-0175">Coiled coil</keyword>
<keyword id="KW-0963">Cytoplasm</keyword>
<keyword id="KW-0903">Direct protein sequencing</keyword>
<keyword id="KW-0225">Disease variant</keyword>
<keyword id="KW-1017">Isopeptide bond</keyword>
<keyword id="KW-0488">Methylation</keyword>
<keyword id="KW-0507">mRNA processing</keyword>
<keyword id="KW-0508">mRNA splicing</keyword>
<keyword id="KW-0539">Nucleus</keyword>
<keyword id="KW-0597">Phosphoprotein</keyword>
<keyword id="KW-1267">Proteomics identification</keyword>
<keyword id="KW-1185">Reference proteome</keyword>
<keyword id="KW-0698">rRNA processing</keyword>
<keyword id="KW-0832">Ubl conjugation</keyword>
<accession>Q9Y2W2</accession>
<accession>Q96AY8</accession>
<sequence>MGRRSTSSTKSGKFMNPTDQARKEARKRELKKNKKQRMMVRAAVLKMKDPKQIIRDMEKLDEMEFNPVQQPQLNEKVLKDKRKKLRETFERILRLYEKENPDIYKELRKLEVEYEQKRAQLSQYFDAVKNAQHVEVESIPLPDMPHAPSNILIQDIPLPGAQPPSILKKTSAYGPPTRAVSILPLLGHGVPRLPPGRKPPGPPPGPPPPQVVQMYGRKVGFALDLPPRRRDEDMLYSPELAQRGHDDDVSSTSEDDGYPEDMDQDKHDDSTDDSDTDKSDGESDGDEFVHRDNGERDNNEEKKSGLSVRFADMPGKSRKKKKNMKELTPLQAMMLRMAGQEIPEEGREVEEFSEDDDEDDSDDSEAEKQSQKQHKEESHSDGTSTASSQQQAPPQSVPPSQIQAPPMPGPPPLGPPPAPPLRPPGPPTGLPPGPPPGAPPFLRPPGMPGLRGPLPRLLPPGPPPGRPPGPPPGPPPGLPPGPPPRGPPPRLPPPAPPGIPPPRPGMMRPPLVPPLGPAPPGLFPPAPLPNPGVLSAPPNLIQRPKADDTSAATIEKKATATISAKPQITNPKAEITRFVPTALRVRRENKGATAAPQRKSEDDSAVPLAKAAPKSGPSVPVSVQTKDDVYEAFMKEMEGLL</sequence>